<feature type="chain" id="PRO_0000222732" description="Core protein VP7">
    <location>
        <begin position="1"/>
        <end position="349"/>
    </location>
</feature>
<feature type="glycosylation site" description="N-linked (GlcNAc...) asparagine; by host" evidence="1">
    <location>
        <position position="287"/>
    </location>
</feature>
<feature type="helix" evidence="3">
    <location>
        <begin position="2"/>
        <end position="15"/>
    </location>
</feature>
<feature type="strand" evidence="3">
    <location>
        <begin position="20"/>
        <end position="22"/>
    </location>
</feature>
<feature type="helix" evidence="3">
    <location>
        <begin position="27"/>
        <end position="44"/>
    </location>
</feature>
<feature type="helix" evidence="3">
    <location>
        <begin position="55"/>
        <end position="73"/>
    </location>
</feature>
<feature type="helix" evidence="3">
    <location>
        <begin position="90"/>
        <end position="94"/>
    </location>
</feature>
<feature type="helix" evidence="3">
    <location>
        <begin position="103"/>
        <end position="116"/>
    </location>
</feature>
<feature type="turn" evidence="3">
    <location>
        <begin position="128"/>
        <end position="131"/>
    </location>
</feature>
<feature type="strand" evidence="3">
    <location>
        <begin position="133"/>
        <end position="136"/>
    </location>
</feature>
<feature type="strand" evidence="3">
    <location>
        <begin position="148"/>
        <end position="155"/>
    </location>
</feature>
<feature type="strand" evidence="3">
    <location>
        <begin position="158"/>
        <end position="163"/>
    </location>
</feature>
<feature type="strand" evidence="3">
    <location>
        <begin position="168"/>
        <end position="170"/>
    </location>
</feature>
<feature type="helix" evidence="3">
    <location>
        <begin position="172"/>
        <end position="174"/>
    </location>
</feature>
<feature type="turn" evidence="3">
    <location>
        <begin position="175"/>
        <end position="177"/>
    </location>
</feature>
<feature type="strand" evidence="3">
    <location>
        <begin position="182"/>
        <end position="195"/>
    </location>
</feature>
<feature type="strand" evidence="3">
    <location>
        <begin position="201"/>
        <end position="203"/>
    </location>
</feature>
<feature type="strand" evidence="3">
    <location>
        <begin position="209"/>
        <end position="212"/>
    </location>
</feature>
<feature type="strand" evidence="3">
    <location>
        <begin position="215"/>
        <end position="217"/>
    </location>
</feature>
<feature type="strand" evidence="3">
    <location>
        <begin position="223"/>
        <end position="225"/>
    </location>
</feature>
<feature type="strand" evidence="3">
    <location>
        <begin position="227"/>
        <end position="229"/>
    </location>
</feature>
<feature type="strand" evidence="3">
    <location>
        <begin position="231"/>
        <end position="234"/>
    </location>
</feature>
<feature type="strand" evidence="3">
    <location>
        <begin position="237"/>
        <end position="239"/>
    </location>
</feature>
<feature type="strand" evidence="3">
    <location>
        <begin position="241"/>
        <end position="254"/>
    </location>
</feature>
<feature type="helix" evidence="3">
    <location>
        <begin position="263"/>
        <end position="271"/>
    </location>
</feature>
<feature type="helix" evidence="3">
    <location>
        <begin position="276"/>
        <end position="286"/>
    </location>
</feature>
<feature type="strand" evidence="3">
    <location>
        <begin position="289"/>
        <end position="291"/>
    </location>
</feature>
<feature type="strand" evidence="3">
    <location>
        <begin position="293"/>
        <end position="295"/>
    </location>
</feature>
<feature type="helix" evidence="3">
    <location>
        <begin position="304"/>
        <end position="323"/>
    </location>
</feature>
<feature type="helix" evidence="3">
    <location>
        <begin position="341"/>
        <end position="346"/>
    </location>
</feature>
<comment type="function">
    <text>The VP7 protein is one of the five proteins (with VP1, VP3, VP4, and VP6) which form the inner capsid of the virus.</text>
</comment>
<comment type="subunit">
    <text>Homotrimer that assemble in a complex of 260 capsomers on an inner scaffold composed of VP3.</text>
</comment>
<comment type="subcellular location">
    <subcellularLocation>
        <location evidence="2">Virion</location>
    </subcellularLocation>
</comment>
<comment type="similarity">
    <text evidence="2">Belongs to the orbivirus VP7 family.</text>
</comment>
<organismHost>
    <name type="scientific">Antilocapra americana</name>
    <name type="common">Pronghorn</name>
    <dbReference type="NCBI Taxonomy" id="9891"/>
</organismHost>
<organismHost>
    <name type="scientific">Bos taurus</name>
    <name type="common">Bovine</name>
    <dbReference type="NCBI Taxonomy" id="9913"/>
</organismHost>
<organismHost>
    <name type="scientific">Capra hircus</name>
    <name type="common">Goat</name>
    <dbReference type="NCBI Taxonomy" id="9925"/>
</organismHost>
<organismHost>
    <name type="scientific">Culicoides variipennis</name>
    <name type="common">Biting midge</name>
    <dbReference type="NCBI Taxonomy" id="46212"/>
</organismHost>
<organismHost>
    <name type="scientific">Ovis aries</name>
    <name type="common">Sheep</name>
    <dbReference type="NCBI Taxonomy" id="9940"/>
</organismHost>
<evidence type="ECO:0000255" key="1"/>
<evidence type="ECO:0000305" key="2"/>
<evidence type="ECO:0007829" key="3">
    <source>
        <dbReference type="PDB" id="1BVP"/>
    </source>
</evidence>
<reference key="1">
    <citation type="journal article" date="1988" name="Nucleic Acids Res.">
        <title>Complete nucleotide sequence of the group-reactive antigen VP7 gene of bluetongue virus.</title>
        <authorList>
            <person name="Yu Y."/>
            <person name="Fukusho A."/>
            <person name="Ritter D.G."/>
            <person name="Roy P."/>
        </authorList>
    </citation>
    <scope>NUCLEOTIDE SEQUENCE [GENOMIC RNA]</scope>
</reference>
<reference key="2">
    <citation type="journal article" date="1995" name="Nature">
        <title>The crystal structure of bluetongue virus VP7.</title>
        <authorList>
            <person name="Grimes J."/>
            <person name="Basak A.K."/>
            <person name="Roy P."/>
            <person name="Stuart D."/>
        </authorList>
    </citation>
    <scope>X-RAY CRYSTALLOGRAPHY (2.6 ANGSTROMS)</scope>
</reference>
<organism>
    <name type="scientific">Bluetongue virus 10 (isolate USA)</name>
    <name type="common">BTV 10</name>
    <dbReference type="NCBI Taxonomy" id="10900"/>
    <lineage>
        <taxon>Viruses</taxon>
        <taxon>Riboviria</taxon>
        <taxon>Orthornavirae</taxon>
        <taxon>Duplornaviricota</taxon>
        <taxon>Resentoviricetes</taxon>
        <taxon>Reovirales</taxon>
        <taxon>Sedoreoviridae</taxon>
        <taxon>Orbivirus</taxon>
        <taxon>Bluetongue virus</taxon>
    </lineage>
</organism>
<proteinExistence type="evidence at protein level"/>
<keyword id="KW-0002">3D-structure</keyword>
<keyword id="KW-0167">Capsid protein</keyword>
<keyword id="KW-0325">Glycoprotein</keyword>
<keyword id="KW-1152">Outer capsid protein</keyword>
<keyword id="KW-1185">Reference proteome</keyword>
<keyword id="KW-0946">Virion</keyword>
<sequence length="349" mass="38548">MDTIAARALTVMRACATLQEARIVLEANVMEILGIAINRYNGLTLRGVTMRPTSLAQRNEMFFMCLDMMLSAAGINVGPISPDYTQHMATIGVLATPEIPFTTEAANEIARVTGETSTWGPARQPYGFFLETEETFQPGRWFMRAAQAVTAVVCGPDMIQVSLNAGARGDVQQIFQGRNDPMMIYLVWRRIENFAMAQGNSQQTQAGVTVSVGGVDMRAGRIIAWDGQAALHVHNPTQQNAMVQIQVVFYISMDKTLNQYPALTAEIFNVYSFRDHTWHGLRTAILNRTTLPNMLPPIFPPNDRDSILTLLLLSTLADVYTVLRPEFAIHGVNPMPGPLTRAIARAAYV</sequence>
<protein>
    <recommendedName>
        <fullName>Core protein VP7</fullName>
    </recommendedName>
</protein>
<dbReference type="EMBL" id="X06463">
    <property type="protein sequence ID" value="CAA29771.1"/>
    <property type="molecule type" value="Genomic_RNA"/>
</dbReference>
<dbReference type="PIR" id="A28537">
    <property type="entry name" value="P7XR10"/>
</dbReference>
<dbReference type="RefSeq" id="YP_052967.1">
    <property type="nucleotide sequence ID" value="NC_006022.1"/>
</dbReference>
<dbReference type="PDB" id="1BVP">
    <property type="method" value="X-ray"/>
    <property type="resolution" value="2.60 A"/>
    <property type="chains" value="1/2/3/4/5/6=1-349"/>
</dbReference>
<dbReference type="PDBsum" id="1BVP"/>
<dbReference type="SMR" id="P69361"/>
<dbReference type="GlyCosmos" id="P69361">
    <property type="glycosylation" value="1 site, No reported glycans"/>
</dbReference>
<dbReference type="KEGG" id="vg:2943155"/>
<dbReference type="EvolutionaryTrace" id="P69361"/>
<dbReference type="Proteomes" id="UP000007662">
    <property type="component" value="Genome"/>
</dbReference>
<dbReference type="GO" id="GO:0019031">
    <property type="term" value="C:viral envelope"/>
    <property type="evidence" value="ECO:0007669"/>
    <property type="project" value="InterPro"/>
</dbReference>
<dbReference type="GO" id="GO:0039624">
    <property type="term" value="C:viral outer capsid"/>
    <property type="evidence" value="ECO:0007669"/>
    <property type="project" value="UniProtKB-KW"/>
</dbReference>
<dbReference type="GO" id="GO:0046789">
    <property type="term" value="F:host cell surface receptor binding"/>
    <property type="evidence" value="ECO:0007669"/>
    <property type="project" value="InterPro"/>
</dbReference>
<dbReference type="GO" id="GO:0005198">
    <property type="term" value="F:structural molecule activity"/>
    <property type="evidence" value="ECO:0007669"/>
    <property type="project" value="InterPro"/>
</dbReference>
<dbReference type="GO" id="GO:0019064">
    <property type="term" value="P:fusion of virus membrane with host plasma membrane"/>
    <property type="evidence" value="ECO:0007669"/>
    <property type="project" value="InterPro"/>
</dbReference>
<dbReference type="Gene3D" id="2.60.120.170">
    <property type="match status" value="1"/>
</dbReference>
<dbReference type="Gene3D" id="1.10.250.10">
    <property type="entry name" value="Bluetongue Virus 10, subunit 1, domain 1"/>
    <property type="match status" value="1"/>
</dbReference>
<dbReference type="Gene3D" id="1.10.170.10">
    <property type="entry name" value="Bluetongue Virus 10, subunit 1, domain 3"/>
    <property type="match status" value="1"/>
</dbReference>
<dbReference type="InterPro" id="IPR008980">
    <property type="entry name" value="Capsid_hemagglutn"/>
</dbReference>
<dbReference type="InterPro" id="IPR001803">
    <property type="entry name" value="Orbi_VP7_capsid"/>
</dbReference>
<dbReference type="InterPro" id="IPR023178">
    <property type="entry name" value="Orbi_VP7_capsid_C"/>
</dbReference>
<dbReference type="InterPro" id="IPR023176">
    <property type="entry name" value="Orbi_VP7_capsid_N"/>
</dbReference>
<dbReference type="InterPro" id="IPR008935">
    <property type="entry name" value="Virus_capsid_a-hlx_vir"/>
</dbReference>
<dbReference type="Pfam" id="PF00897">
    <property type="entry name" value="Orbi_VP7"/>
    <property type="match status" value="1"/>
</dbReference>
<dbReference type="PRINTS" id="PR00903">
    <property type="entry name" value="VP7CAPSID"/>
</dbReference>
<dbReference type="SUPFAM" id="SSF48345">
    <property type="entry name" value="A virus capsid protein alpha-helical domain"/>
    <property type="match status" value="1"/>
</dbReference>
<dbReference type="SUPFAM" id="SSF49818">
    <property type="entry name" value="Viral protein domain"/>
    <property type="match status" value="1"/>
</dbReference>
<accession>P69361</accession>
<accession>P07886</accession>
<gene>
    <name type="primary">Segment-7</name>
</gene>
<name>VP7_BTV10</name>